<feature type="chain" id="PRO_1000011549" description="GTPase Der">
    <location>
        <begin position="1"/>
        <end position="447"/>
    </location>
</feature>
<feature type="domain" description="EngA-type G 1">
    <location>
        <begin position="3"/>
        <end position="167"/>
    </location>
</feature>
<feature type="domain" description="EngA-type G 2">
    <location>
        <begin position="180"/>
        <end position="353"/>
    </location>
</feature>
<feature type="domain" description="KH-like" evidence="1">
    <location>
        <begin position="353"/>
        <end position="438"/>
    </location>
</feature>
<feature type="binding site" evidence="1">
    <location>
        <begin position="9"/>
        <end position="16"/>
    </location>
    <ligand>
        <name>GTP</name>
        <dbReference type="ChEBI" id="CHEBI:37565"/>
        <label>1</label>
    </ligand>
</feature>
<feature type="binding site" evidence="1">
    <location>
        <begin position="56"/>
        <end position="60"/>
    </location>
    <ligand>
        <name>GTP</name>
        <dbReference type="ChEBI" id="CHEBI:37565"/>
        <label>1</label>
    </ligand>
</feature>
<feature type="binding site" evidence="1">
    <location>
        <begin position="119"/>
        <end position="122"/>
    </location>
    <ligand>
        <name>GTP</name>
        <dbReference type="ChEBI" id="CHEBI:37565"/>
        <label>1</label>
    </ligand>
</feature>
<feature type="binding site" evidence="1">
    <location>
        <begin position="186"/>
        <end position="193"/>
    </location>
    <ligand>
        <name>GTP</name>
        <dbReference type="ChEBI" id="CHEBI:37565"/>
        <label>2</label>
    </ligand>
</feature>
<feature type="binding site" evidence="1">
    <location>
        <begin position="233"/>
        <end position="237"/>
    </location>
    <ligand>
        <name>GTP</name>
        <dbReference type="ChEBI" id="CHEBI:37565"/>
        <label>2</label>
    </ligand>
</feature>
<feature type="binding site" evidence="1">
    <location>
        <begin position="298"/>
        <end position="301"/>
    </location>
    <ligand>
        <name>GTP</name>
        <dbReference type="ChEBI" id="CHEBI:37565"/>
        <label>2</label>
    </ligand>
</feature>
<sequence>MKPVIALVGRPNVGKSTLFNRLTKSRDAIVADFAGLTRDRHYGNGKLGKHEYIVIDTGGFEPDASSGIYREMAKQTQQAVAEADVVIFVVDARAGLSAQDHDIANYLRRLGKPCLLVGNKAEGMREGVQLAEFYELGLGEVLPVSAAHGQGVRSMLESALDTLQLPEPEDEPEDGEDKPIRLAVAGRPNVGKSTLINTWLGEERLVAFDMPGTTRDAISVPFERNGQQFELIDTAGLRRKGKVFEAIEKFSVVKTLQAIESANVVLLLLDATQGVTDQDAHIAGYILESGRAVVLAVNKWDAVDDYGRQMLERSIETRLSFLKFASLHFISAKKRQGLGPLWTSIAQAHKAATCKMPTPVLTRLLLEAVQFQAPKRSGMFRPKMRYAHQGGMNPPVIVIHGNSLEHVTDAYKRFLEGRFRKEFDLVGTPLRIEMKTSRNPFAEDSDA</sequence>
<protein>
    <recommendedName>
        <fullName evidence="1">GTPase Der</fullName>
    </recommendedName>
    <alternativeName>
        <fullName evidence="1">GTP-binding protein EngA</fullName>
    </alternativeName>
</protein>
<reference key="1">
    <citation type="submission" date="2006-12" db="EMBL/GenBank/DDBJ databases">
        <title>Complete sequence of Acidovorax avenae subsp. citrulli AAC00-1.</title>
        <authorList>
            <person name="Copeland A."/>
            <person name="Lucas S."/>
            <person name="Lapidus A."/>
            <person name="Barry K."/>
            <person name="Detter J.C."/>
            <person name="Glavina del Rio T."/>
            <person name="Dalin E."/>
            <person name="Tice H."/>
            <person name="Pitluck S."/>
            <person name="Kiss H."/>
            <person name="Brettin T."/>
            <person name="Bruce D."/>
            <person name="Han C."/>
            <person name="Tapia R."/>
            <person name="Gilna P."/>
            <person name="Schmutz J."/>
            <person name="Larimer F."/>
            <person name="Land M."/>
            <person name="Hauser L."/>
            <person name="Kyrpides N."/>
            <person name="Kim E."/>
            <person name="Stahl D."/>
            <person name="Richardson P."/>
        </authorList>
    </citation>
    <scope>NUCLEOTIDE SEQUENCE [LARGE SCALE GENOMIC DNA]</scope>
    <source>
        <strain>AAC00-1</strain>
    </source>
</reference>
<organism>
    <name type="scientific">Paracidovorax citrulli (strain AAC00-1)</name>
    <name type="common">Acidovorax citrulli</name>
    <dbReference type="NCBI Taxonomy" id="397945"/>
    <lineage>
        <taxon>Bacteria</taxon>
        <taxon>Pseudomonadati</taxon>
        <taxon>Pseudomonadota</taxon>
        <taxon>Betaproteobacteria</taxon>
        <taxon>Burkholderiales</taxon>
        <taxon>Comamonadaceae</taxon>
        <taxon>Paracidovorax</taxon>
    </lineage>
</organism>
<keyword id="KW-0342">GTP-binding</keyword>
<keyword id="KW-0547">Nucleotide-binding</keyword>
<keyword id="KW-0677">Repeat</keyword>
<keyword id="KW-0690">Ribosome biogenesis</keyword>
<evidence type="ECO:0000255" key="1">
    <source>
        <dbReference type="HAMAP-Rule" id="MF_00195"/>
    </source>
</evidence>
<gene>
    <name evidence="1" type="primary">der</name>
    <name type="synonym">engA</name>
    <name type="ordered locus">Aave_1428</name>
</gene>
<dbReference type="EMBL" id="CP000512">
    <property type="protein sequence ID" value="ABM32019.1"/>
    <property type="molecule type" value="Genomic_DNA"/>
</dbReference>
<dbReference type="RefSeq" id="WP_011794569.1">
    <property type="nucleotide sequence ID" value="NC_008752.1"/>
</dbReference>
<dbReference type="SMR" id="A1TM31"/>
<dbReference type="STRING" id="397945.Aave_1428"/>
<dbReference type="GeneID" id="79791092"/>
<dbReference type="KEGG" id="aav:Aave_1428"/>
<dbReference type="eggNOG" id="COG1160">
    <property type="taxonomic scope" value="Bacteria"/>
</dbReference>
<dbReference type="HOGENOM" id="CLU_016077_6_2_4"/>
<dbReference type="OrthoDB" id="9805918at2"/>
<dbReference type="Proteomes" id="UP000002596">
    <property type="component" value="Chromosome"/>
</dbReference>
<dbReference type="GO" id="GO:0005525">
    <property type="term" value="F:GTP binding"/>
    <property type="evidence" value="ECO:0007669"/>
    <property type="project" value="UniProtKB-UniRule"/>
</dbReference>
<dbReference type="GO" id="GO:0043022">
    <property type="term" value="F:ribosome binding"/>
    <property type="evidence" value="ECO:0007669"/>
    <property type="project" value="TreeGrafter"/>
</dbReference>
<dbReference type="GO" id="GO:0042254">
    <property type="term" value="P:ribosome biogenesis"/>
    <property type="evidence" value="ECO:0007669"/>
    <property type="project" value="UniProtKB-KW"/>
</dbReference>
<dbReference type="CDD" id="cd01894">
    <property type="entry name" value="EngA1"/>
    <property type="match status" value="1"/>
</dbReference>
<dbReference type="CDD" id="cd01895">
    <property type="entry name" value="EngA2"/>
    <property type="match status" value="1"/>
</dbReference>
<dbReference type="FunFam" id="3.40.50.300:FF:000040">
    <property type="entry name" value="GTPase Der"/>
    <property type="match status" value="1"/>
</dbReference>
<dbReference type="FunFam" id="3.40.50.300:FF:000057">
    <property type="entry name" value="GTPase Der"/>
    <property type="match status" value="1"/>
</dbReference>
<dbReference type="Gene3D" id="3.30.300.20">
    <property type="match status" value="1"/>
</dbReference>
<dbReference type="Gene3D" id="3.40.50.300">
    <property type="entry name" value="P-loop containing nucleotide triphosphate hydrolases"/>
    <property type="match status" value="2"/>
</dbReference>
<dbReference type="HAMAP" id="MF_00195">
    <property type="entry name" value="GTPase_Der"/>
    <property type="match status" value="1"/>
</dbReference>
<dbReference type="InterPro" id="IPR031166">
    <property type="entry name" value="G_ENGA"/>
</dbReference>
<dbReference type="InterPro" id="IPR006073">
    <property type="entry name" value="GTP-bd"/>
</dbReference>
<dbReference type="InterPro" id="IPR016484">
    <property type="entry name" value="GTPase_Der"/>
</dbReference>
<dbReference type="InterPro" id="IPR032859">
    <property type="entry name" value="KH_dom-like"/>
</dbReference>
<dbReference type="InterPro" id="IPR015946">
    <property type="entry name" value="KH_dom-like_a/b"/>
</dbReference>
<dbReference type="InterPro" id="IPR027417">
    <property type="entry name" value="P-loop_NTPase"/>
</dbReference>
<dbReference type="InterPro" id="IPR005225">
    <property type="entry name" value="Small_GTP-bd"/>
</dbReference>
<dbReference type="NCBIfam" id="TIGR03594">
    <property type="entry name" value="GTPase_EngA"/>
    <property type="match status" value="1"/>
</dbReference>
<dbReference type="NCBIfam" id="TIGR00231">
    <property type="entry name" value="small_GTP"/>
    <property type="match status" value="2"/>
</dbReference>
<dbReference type="PANTHER" id="PTHR43834">
    <property type="entry name" value="GTPASE DER"/>
    <property type="match status" value="1"/>
</dbReference>
<dbReference type="PANTHER" id="PTHR43834:SF6">
    <property type="entry name" value="GTPASE DER"/>
    <property type="match status" value="1"/>
</dbReference>
<dbReference type="Pfam" id="PF14714">
    <property type="entry name" value="KH_dom-like"/>
    <property type="match status" value="1"/>
</dbReference>
<dbReference type="Pfam" id="PF01926">
    <property type="entry name" value="MMR_HSR1"/>
    <property type="match status" value="2"/>
</dbReference>
<dbReference type="PIRSF" id="PIRSF006485">
    <property type="entry name" value="GTP-binding_EngA"/>
    <property type="match status" value="1"/>
</dbReference>
<dbReference type="PRINTS" id="PR00326">
    <property type="entry name" value="GTP1OBG"/>
</dbReference>
<dbReference type="SUPFAM" id="SSF52540">
    <property type="entry name" value="P-loop containing nucleoside triphosphate hydrolases"/>
    <property type="match status" value="2"/>
</dbReference>
<dbReference type="PROSITE" id="PS51712">
    <property type="entry name" value="G_ENGA"/>
    <property type="match status" value="2"/>
</dbReference>
<proteinExistence type="inferred from homology"/>
<comment type="function">
    <text evidence="1">GTPase that plays an essential role in the late steps of ribosome biogenesis.</text>
</comment>
<comment type="subunit">
    <text evidence="1">Associates with the 50S ribosomal subunit.</text>
</comment>
<comment type="similarity">
    <text evidence="1">Belongs to the TRAFAC class TrmE-Era-EngA-EngB-Septin-like GTPase superfamily. EngA (Der) GTPase family.</text>
</comment>
<accession>A1TM31</accession>
<name>DER_PARC0</name>